<accession>Q8R322</accession>
<accession>A3KGV8</accession>
<accession>Q3TT10</accession>
<accession>Q3TU23</accession>
<accession>Q3UD65</accession>
<accession>Q8BT16</accession>
<accession>Q9D4A6</accession>
<keyword id="KW-0175">Coiled coil</keyword>
<keyword id="KW-0963">Cytoplasm</keyword>
<keyword id="KW-0509">mRNA transport</keyword>
<keyword id="KW-0906">Nuclear pore complex</keyword>
<keyword id="KW-0539">Nucleus</keyword>
<keyword id="KW-0597">Phosphoprotein</keyword>
<keyword id="KW-0653">Protein transport</keyword>
<keyword id="KW-1185">Reference proteome</keyword>
<keyword id="KW-0811">Translocation</keyword>
<keyword id="KW-0813">Transport</keyword>
<dbReference type="EMBL" id="AK016671">
    <property type="protein sequence ID" value="BAB30371.1"/>
    <property type="molecule type" value="mRNA"/>
</dbReference>
<dbReference type="EMBL" id="AK028183">
    <property type="protein sequence ID" value="BAC25796.1"/>
    <property type="status" value="ALT_FRAME"/>
    <property type="molecule type" value="mRNA"/>
</dbReference>
<dbReference type="EMBL" id="AK133888">
    <property type="protein sequence ID" value="BAE21914.1"/>
    <property type="molecule type" value="mRNA"/>
</dbReference>
<dbReference type="EMBL" id="AK145748">
    <property type="protein sequence ID" value="BAE26625.1"/>
    <property type="molecule type" value="mRNA"/>
</dbReference>
<dbReference type="EMBL" id="AK150230">
    <property type="protein sequence ID" value="BAE29396.1"/>
    <property type="molecule type" value="mRNA"/>
</dbReference>
<dbReference type="EMBL" id="AK161015">
    <property type="protein sequence ID" value="BAE36148.1"/>
    <property type="molecule type" value="mRNA"/>
</dbReference>
<dbReference type="EMBL" id="AK161659">
    <property type="protein sequence ID" value="BAE36515.1"/>
    <property type="status" value="ALT_FRAME"/>
    <property type="molecule type" value="mRNA"/>
</dbReference>
<dbReference type="EMBL" id="AL928926">
    <property type="status" value="NOT_ANNOTATED_CDS"/>
    <property type="molecule type" value="Genomic_DNA"/>
</dbReference>
<dbReference type="EMBL" id="BC026797">
    <property type="protein sequence ID" value="AAH26797.1"/>
    <property type="molecule type" value="mRNA"/>
</dbReference>
<dbReference type="CCDS" id="CCDS15862.1"/>
<dbReference type="RefSeq" id="NP_083199.1">
    <property type="nucleotide sequence ID" value="NM_028923.3"/>
</dbReference>
<dbReference type="SMR" id="Q8R322"/>
<dbReference type="BioGRID" id="216730">
    <property type="interactions" value="3"/>
</dbReference>
<dbReference type="ComplexPortal" id="CPX-4474">
    <property type="entry name" value="Nuclear pore complex"/>
</dbReference>
<dbReference type="FunCoup" id="Q8R322">
    <property type="interactions" value="3537"/>
</dbReference>
<dbReference type="IntAct" id="Q8R322">
    <property type="interactions" value="1"/>
</dbReference>
<dbReference type="MINT" id="Q8R322"/>
<dbReference type="STRING" id="10090.ENSMUSP00000019859"/>
<dbReference type="iPTMnet" id="Q8R322"/>
<dbReference type="PhosphoSitePlus" id="Q8R322"/>
<dbReference type="jPOST" id="Q8R322"/>
<dbReference type="PaxDb" id="10090-ENSMUSP00000019859"/>
<dbReference type="PeptideAtlas" id="Q8R322"/>
<dbReference type="ProteomicsDB" id="267727"/>
<dbReference type="Pumba" id="Q8R322"/>
<dbReference type="Antibodypedia" id="31163">
    <property type="antibodies" value="202 antibodies from 31 providers"/>
</dbReference>
<dbReference type="DNASU" id="74412"/>
<dbReference type="Ensembl" id="ENSMUST00000019859.9">
    <property type="protein sequence ID" value="ENSMUSP00000019859.9"/>
    <property type="gene ID" value="ENSMUSG00000019715.15"/>
</dbReference>
<dbReference type="GeneID" id="74412"/>
<dbReference type="KEGG" id="mmu:74412"/>
<dbReference type="UCSC" id="uc008jaq.2">
    <property type="organism name" value="mouse"/>
</dbReference>
<dbReference type="AGR" id="MGI:1921662"/>
<dbReference type="CTD" id="2733"/>
<dbReference type="MGI" id="MGI:1921662">
    <property type="gene designation" value="Gle1"/>
</dbReference>
<dbReference type="VEuPathDB" id="HostDB:ENSMUSG00000019715"/>
<dbReference type="eggNOG" id="KOG2412">
    <property type="taxonomic scope" value="Eukaryota"/>
</dbReference>
<dbReference type="GeneTree" id="ENSGT00390000012903"/>
<dbReference type="HOGENOM" id="CLU_024662_1_0_1"/>
<dbReference type="InParanoid" id="Q8R322"/>
<dbReference type="OMA" id="AYMYKES"/>
<dbReference type="OrthoDB" id="420884at2759"/>
<dbReference type="PhylomeDB" id="Q8R322"/>
<dbReference type="TreeFam" id="TF324158"/>
<dbReference type="Reactome" id="R-MMU-159236">
    <property type="pathway name" value="Transport of Mature mRNA derived from an Intron-Containing Transcript"/>
</dbReference>
<dbReference type="BioGRID-ORCS" id="74412">
    <property type="hits" value="19 hits in 78 CRISPR screens"/>
</dbReference>
<dbReference type="ChiTaRS" id="Gle1">
    <property type="organism name" value="mouse"/>
</dbReference>
<dbReference type="PRO" id="PR:Q8R322"/>
<dbReference type="Proteomes" id="UP000000589">
    <property type="component" value="Chromosome 2"/>
</dbReference>
<dbReference type="RNAct" id="Q8R322">
    <property type="molecule type" value="protein"/>
</dbReference>
<dbReference type="Bgee" id="ENSMUSG00000019715">
    <property type="expression patterns" value="Expressed in secondary oocyte and 277 other cell types or tissues"/>
</dbReference>
<dbReference type="GO" id="GO:0005814">
    <property type="term" value="C:centriole"/>
    <property type="evidence" value="ECO:0007669"/>
    <property type="project" value="Ensembl"/>
</dbReference>
<dbReference type="GO" id="GO:0005813">
    <property type="term" value="C:centrosome"/>
    <property type="evidence" value="ECO:0007669"/>
    <property type="project" value="Ensembl"/>
</dbReference>
<dbReference type="GO" id="GO:0036064">
    <property type="term" value="C:ciliary basal body"/>
    <property type="evidence" value="ECO:0007669"/>
    <property type="project" value="Ensembl"/>
</dbReference>
<dbReference type="GO" id="GO:0005829">
    <property type="term" value="C:cytosol"/>
    <property type="evidence" value="ECO:0007669"/>
    <property type="project" value="Ensembl"/>
</dbReference>
<dbReference type="GO" id="GO:0005635">
    <property type="term" value="C:nuclear envelope"/>
    <property type="evidence" value="ECO:0000266"/>
    <property type="project" value="ComplexPortal"/>
</dbReference>
<dbReference type="GO" id="GO:0031965">
    <property type="term" value="C:nuclear membrane"/>
    <property type="evidence" value="ECO:0007669"/>
    <property type="project" value="Ensembl"/>
</dbReference>
<dbReference type="GO" id="GO:0005643">
    <property type="term" value="C:nuclear pore"/>
    <property type="evidence" value="ECO:0000303"/>
    <property type="project" value="ComplexPortal"/>
</dbReference>
<dbReference type="GO" id="GO:0005730">
    <property type="term" value="C:nucleolus"/>
    <property type="evidence" value="ECO:0007669"/>
    <property type="project" value="Ensembl"/>
</dbReference>
<dbReference type="GO" id="GO:0042802">
    <property type="term" value="F:identical protein binding"/>
    <property type="evidence" value="ECO:0007669"/>
    <property type="project" value="Ensembl"/>
</dbReference>
<dbReference type="GO" id="GO:0006913">
    <property type="term" value="P:nucleocytoplasmic transport"/>
    <property type="evidence" value="ECO:0000303"/>
    <property type="project" value="ComplexPortal"/>
</dbReference>
<dbReference type="GO" id="GO:0016973">
    <property type="term" value="P:poly(A)+ mRNA export from nucleus"/>
    <property type="evidence" value="ECO:0007669"/>
    <property type="project" value="InterPro"/>
</dbReference>
<dbReference type="GO" id="GO:0015031">
    <property type="term" value="P:protein transport"/>
    <property type="evidence" value="ECO:0007669"/>
    <property type="project" value="UniProtKB-KW"/>
</dbReference>
<dbReference type="FunFam" id="1.25.40.510:FF:000001">
    <property type="entry name" value="Nucleoporin GLE1 isoform 1"/>
    <property type="match status" value="1"/>
</dbReference>
<dbReference type="Gene3D" id="1.25.40.510">
    <property type="entry name" value="GLE1-like"/>
    <property type="match status" value="1"/>
</dbReference>
<dbReference type="InterPro" id="IPR012476">
    <property type="entry name" value="GLE1"/>
</dbReference>
<dbReference type="InterPro" id="IPR038506">
    <property type="entry name" value="GLE1-like_sf"/>
</dbReference>
<dbReference type="PANTHER" id="PTHR12960">
    <property type="entry name" value="GLE-1-RELATED"/>
    <property type="match status" value="1"/>
</dbReference>
<dbReference type="PANTHER" id="PTHR12960:SF0">
    <property type="entry name" value="MRNA EXPORT FACTOR GLE1"/>
    <property type="match status" value="1"/>
</dbReference>
<dbReference type="Pfam" id="PF07817">
    <property type="entry name" value="GLE1"/>
    <property type="match status" value="1"/>
</dbReference>
<name>GLE1_MOUSE</name>
<feature type="chain" id="PRO_0000204823" description="mRNA export factor GLE1">
    <location>
        <begin position="1"/>
        <end position="699"/>
    </location>
</feature>
<feature type="region of interest" description="Interaction with NUP155" evidence="1">
    <location>
        <begin position="1"/>
        <end position="29"/>
    </location>
</feature>
<feature type="region of interest" description="Disordered" evidence="4">
    <location>
        <begin position="62"/>
        <end position="123"/>
    </location>
</feature>
<feature type="region of interest" description="Disordered" evidence="4">
    <location>
        <begin position="334"/>
        <end position="374"/>
    </location>
</feature>
<feature type="region of interest" description="Mediates the shuttling between the nucleus and the cytoplasm" evidence="1">
    <location>
        <begin position="445"/>
        <end position="484"/>
    </location>
</feature>
<feature type="region of interest" description="Interaction with NUPL2" evidence="1">
    <location>
        <begin position="657"/>
        <end position="699"/>
    </location>
</feature>
<feature type="coiled-coil region" evidence="3">
    <location>
        <begin position="154"/>
        <end position="274"/>
    </location>
</feature>
<feature type="coiled-coil region" evidence="3">
    <location>
        <begin position="306"/>
        <end position="356"/>
    </location>
</feature>
<feature type="compositionally biased region" description="Low complexity" evidence="4">
    <location>
        <begin position="67"/>
        <end position="98"/>
    </location>
</feature>
<feature type="compositionally biased region" description="Basic and acidic residues" evidence="4">
    <location>
        <begin position="340"/>
        <end position="351"/>
    </location>
</feature>
<feature type="modified residue" description="Phosphoserine" evidence="2">
    <location>
        <position position="41"/>
    </location>
</feature>
<feature type="modified residue" description="Phosphoserine" evidence="2">
    <location>
        <position position="91"/>
    </location>
</feature>
<feature type="modified residue" description="Phosphoserine" evidence="2">
    <location>
        <position position="101"/>
    </location>
</feature>
<feature type="modified residue" description="Phosphoserine" evidence="7">
    <location>
        <position position="352"/>
    </location>
</feature>
<feature type="sequence conflict" description="In Ref. 3; AAH26797." evidence="5" ref="3">
    <location>
        <position position="70"/>
    </location>
</feature>
<feature type="sequence conflict" description="In Ref. 1; BAC25796." evidence="5" ref="1">
    <original>L</original>
    <variation>R</variation>
    <location>
        <position position="88"/>
    </location>
</feature>
<feature type="sequence conflict" description="In Ref. 3; AAH26797." evidence="5" ref="3">
    <original>P</original>
    <variation>Q</variation>
    <location>
        <position position="115"/>
    </location>
</feature>
<feature type="sequence conflict" description="In Ref. 3; BAE36148." evidence="5" ref="3">
    <original>K</original>
    <variation>E</variation>
    <location>
        <position position="206"/>
    </location>
</feature>
<feature type="sequence conflict" description="In Ref. 3; AAH26797." evidence="5" ref="3">
    <original>A</original>
    <variation>G</variation>
    <location>
        <position position="359"/>
    </location>
</feature>
<feature type="sequence conflict" description="In Ref. 3; AAH26797." evidence="5" ref="3">
    <original>S</original>
    <variation>I</variation>
    <location>
        <position position="368"/>
    </location>
</feature>
<feature type="sequence conflict" description="In Ref. 3; AAH26797." evidence="5" ref="3">
    <original>A</original>
    <variation>T</variation>
    <location>
        <position position="374"/>
    </location>
</feature>
<feature type="sequence conflict" description="In Ref. 1; BAC25796." evidence="5" ref="1">
    <original>F</original>
    <variation>L</variation>
    <location>
        <position position="535"/>
    </location>
</feature>
<feature type="sequence conflict" description="In Ref. 1; BAC25796." evidence="5" ref="1">
    <original>G</original>
    <variation>S</variation>
    <location>
        <position position="598"/>
    </location>
</feature>
<reference key="1">
    <citation type="journal article" date="2005" name="Science">
        <title>The transcriptional landscape of the mammalian genome.</title>
        <authorList>
            <person name="Carninci P."/>
            <person name="Kasukawa T."/>
            <person name="Katayama S."/>
            <person name="Gough J."/>
            <person name="Frith M.C."/>
            <person name="Maeda N."/>
            <person name="Oyama R."/>
            <person name="Ravasi T."/>
            <person name="Lenhard B."/>
            <person name="Wells C."/>
            <person name="Kodzius R."/>
            <person name="Shimokawa K."/>
            <person name="Bajic V.B."/>
            <person name="Brenner S.E."/>
            <person name="Batalov S."/>
            <person name="Forrest A.R."/>
            <person name="Zavolan M."/>
            <person name="Davis M.J."/>
            <person name="Wilming L.G."/>
            <person name="Aidinis V."/>
            <person name="Allen J.E."/>
            <person name="Ambesi-Impiombato A."/>
            <person name="Apweiler R."/>
            <person name="Aturaliya R.N."/>
            <person name="Bailey T.L."/>
            <person name="Bansal M."/>
            <person name="Baxter L."/>
            <person name="Beisel K.W."/>
            <person name="Bersano T."/>
            <person name="Bono H."/>
            <person name="Chalk A.M."/>
            <person name="Chiu K.P."/>
            <person name="Choudhary V."/>
            <person name="Christoffels A."/>
            <person name="Clutterbuck D.R."/>
            <person name="Crowe M.L."/>
            <person name="Dalla E."/>
            <person name="Dalrymple B.P."/>
            <person name="de Bono B."/>
            <person name="Della Gatta G."/>
            <person name="di Bernardo D."/>
            <person name="Down T."/>
            <person name="Engstrom P."/>
            <person name="Fagiolini M."/>
            <person name="Faulkner G."/>
            <person name="Fletcher C.F."/>
            <person name="Fukushima T."/>
            <person name="Furuno M."/>
            <person name="Futaki S."/>
            <person name="Gariboldi M."/>
            <person name="Georgii-Hemming P."/>
            <person name="Gingeras T.R."/>
            <person name="Gojobori T."/>
            <person name="Green R.E."/>
            <person name="Gustincich S."/>
            <person name="Harbers M."/>
            <person name="Hayashi Y."/>
            <person name="Hensch T.K."/>
            <person name="Hirokawa N."/>
            <person name="Hill D."/>
            <person name="Huminiecki L."/>
            <person name="Iacono M."/>
            <person name="Ikeo K."/>
            <person name="Iwama A."/>
            <person name="Ishikawa T."/>
            <person name="Jakt M."/>
            <person name="Kanapin A."/>
            <person name="Katoh M."/>
            <person name="Kawasawa Y."/>
            <person name="Kelso J."/>
            <person name="Kitamura H."/>
            <person name="Kitano H."/>
            <person name="Kollias G."/>
            <person name="Krishnan S.P."/>
            <person name="Kruger A."/>
            <person name="Kummerfeld S.K."/>
            <person name="Kurochkin I.V."/>
            <person name="Lareau L.F."/>
            <person name="Lazarevic D."/>
            <person name="Lipovich L."/>
            <person name="Liu J."/>
            <person name="Liuni S."/>
            <person name="McWilliam S."/>
            <person name="Madan Babu M."/>
            <person name="Madera M."/>
            <person name="Marchionni L."/>
            <person name="Matsuda H."/>
            <person name="Matsuzawa S."/>
            <person name="Miki H."/>
            <person name="Mignone F."/>
            <person name="Miyake S."/>
            <person name="Morris K."/>
            <person name="Mottagui-Tabar S."/>
            <person name="Mulder N."/>
            <person name="Nakano N."/>
            <person name="Nakauchi H."/>
            <person name="Ng P."/>
            <person name="Nilsson R."/>
            <person name="Nishiguchi S."/>
            <person name="Nishikawa S."/>
            <person name="Nori F."/>
            <person name="Ohara O."/>
            <person name="Okazaki Y."/>
            <person name="Orlando V."/>
            <person name="Pang K.C."/>
            <person name="Pavan W.J."/>
            <person name="Pavesi G."/>
            <person name="Pesole G."/>
            <person name="Petrovsky N."/>
            <person name="Piazza S."/>
            <person name="Reed J."/>
            <person name="Reid J.F."/>
            <person name="Ring B.Z."/>
            <person name="Ringwald M."/>
            <person name="Rost B."/>
            <person name="Ruan Y."/>
            <person name="Salzberg S.L."/>
            <person name="Sandelin A."/>
            <person name="Schneider C."/>
            <person name="Schoenbach C."/>
            <person name="Sekiguchi K."/>
            <person name="Semple C.A."/>
            <person name="Seno S."/>
            <person name="Sessa L."/>
            <person name="Sheng Y."/>
            <person name="Shibata Y."/>
            <person name="Shimada H."/>
            <person name="Shimada K."/>
            <person name="Silva D."/>
            <person name="Sinclair B."/>
            <person name="Sperling S."/>
            <person name="Stupka E."/>
            <person name="Sugiura K."/>
            <person name="Sultana R."/>
            <person name="Takenaka Y."/>
            <person name="Taki K."/>
            <person name="Tammoja K."/>
            <person name="Tan S.L."/>
            <person name="Tang S."/>
            <person name="Taylor M.S."/>
            <person name="Tegner J."/>
            <person name="Teichmann S.A."/>
            <person name="Ueda H.R."/>
            <person name="van Nimwegen E."/>
            <person name="Verardo R."/>
            <person name="Wei C.L."/>
            <person name="Yagi K."/>
            <person name="Yamanishi H."/>
            <person name="Zabarovsky E."/>
            <person name="Zhu S."/>
            <person name="Zimmer A."/>
            <person name="Hide W."/>
            <person name="Bult C."/>
            <person name="Grimmond S.M."/>
            <person name="Teasdale R.D."/>
            <person name="Liu E.T."/>
            <person name="Brusic V."/>
            <person name="Quackenbush J."/>
            <person name="Wahlestedt C."/>
            <person name="Mattick J.S."/>
            <person name="Hume D.A."/>
            <person name="Kai C."/>
            <person name="Sasaki D."/>
            <person name="Tomaru Y."/>
            <person name="Fukuda S."/>
            <person name="Kanamori-Katayama M."/>
            <person name="Suzuki M."/>
            <person name="Aoki J."/>
            <person name="Arakawa T."/>
            <person name="Iida J."/>
            <person name="Imamura K."/>
            <person name="Itoh M."/>
            <person name="Kato T."/>
            <person name="Kawaji H."/>
            <person name="Kawagashira N."/>
            <person name="Kawashima T."/>
            <person name="Kojima M."/>
            <person name="Kondo S."/>
            <person name="Konno H."/>
            <person name="Nakano K."/>
            <person name="Ninomiya N."/>
            <person name="Nishio T."/>
            <person name="Okada M."/>
            <person name="Plessy C."/>
            <person name="Shibata K."/>
            <person name="Shiraki T."/>
            <person name="Suzuki S."/>
            <person name="Tagami M."/>
            <person name="Waki K."/>
            <person name="Watahiki A."/>
            <person name="Okamura-Oho Y."/>
            <person name="Suzuki H."/>
            <person name="Kawai J."/>
            <person name="Hayashizaki Y."/>
        </authorList>
    </citation>
    <scope>NUCLEOTIDE SEQUENCE [LARGE SCALE MRNA]</scope>
    <source>
        <strain>C57BL/6J</strain>
        <tissue>Bone marrow</tissue>
        <tissue>Head</tissue>
        <tissue>Testis</tissue>
    </source>
</reference>
<reference key="2">
    <citation type="journal article" date="2009" name="PLoS Biol.">
        <title>Lineage-specific biology revealed by a finished genome assembly of the mouse.</title>
        <authorList>
            <person name="Church D.M."/>
            <person name="Goodstadt L."/>
            <person name="Hillier L.W."/>
            <person name="Zody M.C."/>
            <person name="Goldstein S."/>
            <person name="She X."/>
            <person name="Bult C.J."/>
            <person name="Agarwala R."/>
            <person name="Cherry J.L."/>
            <person name="DiCuccio M."/>
            <person name="Hlavina W."/>
            <person name="Kapustin Y."/>
            <person name="Meric P."/>
            <person name="Maglott D."/>
            <person name="Birtle Z."/>
            <person name="Marques A.C."/>
            <person name="Graves T."/>
            <person name="Zhou S."/>
            <person name="Teague B."/>
            <person name="Potamousis K."/>
            <person name="Churas C."/>
            <person name="Place M."/>
            <person name="Herschleb J."/>
            <person name="Runnheim R."/>
            <person name="Forrest D."/>
            <person name="Amos-Landgraf J."/>
            <person name="Schwartz D.C."/>
            <person name="Cheng Z."/>
            <person name="Lindblad-Toh K."/>
            <person name="Eichler E.E."/>
            <person name="Ponting C.P."/>
        </authorList>
    </citation>
    <scope>NUCLEOTIDE SEQUENCE [LARGE SCALE GENOMIC DNA]</scope>
    <source>
        <strain>C57BL/6J</strain>
    </source>
</reference>
<reference key="3">
    <citation type="journal article" date="2004" name="Genome Res.">
        <title>The status, quality, and expansion of the NIH full-length cDNA project: the Mammalian Gene Collection (MGC).</title>
        <authorList>
            <consortium name="The MGC Project Team"/>
        </authorList>
    </citation>
    <scope>NUCLEOTIDE SEQUENCE [LARGE SCALE MRNA]</scope>
    <source>
        <strain>Czech II</strain>
        <tissue>Mammary tumor</tissue>
    </source>
</reference>
<reference key="4">
    <citation type="journal article" date="2007" name="Proc. Natl. Acad. Sci. U.S.A.">
        <title>Large-scale phosphorylation analysis of mouse liver.</title>
        <authorList>
            <person name="Villen J."/>
            <person name="Beausoleil S.A."/>
            <person name="Gerber S.A."/>
            <person name="Gygi S.P."/>
        </authorList>
    </citation>
    <scope>PHOSPHORYLATION [LARGE SCALE ANALYSIS] AT SER-352</scope>
    <scope>IDENTIFICATION BY MASS SPECTROMETRY [LARGE SCALE ANALYSIS]</scope>
    <source>
        <tissue>Liver</tissue>
    </source>
</reference>
<reference key="5">
    <citation type="journal article" date="2010" name="Cell">
        <title>A tissue-specific atlas of mouse protein phosphorylation and expression.</title>
        <authorList>
            <person name="Huttlin E.L."/>
            <person name="Jedrychowski M.P."/>
            <person name="Elias J.E."/>
            <person name="Goswami T."/>
            <person name="Rad R."/>
            <person name="Beausoleil S.A."/>
            <person name="Villen J."/>
            <person name="Haas W."/>
            <person name="Sowa M.E."/>
            <person name="Gygi S.P."/>
        </authorList>
    </citation>
    <scope>IDENTIFICATION BY MASS SPECTROMETRY [LARGE SCALE ANALYSIS]</scope>
    <source>
        <tissue>Spleen</tissue>
    </source>
</reference>
<protein>
    <recommendedName>
        <fullName evidence="5">mRNA export factor GLE1</fullName>
    </recommendedName>
    <alternativeName>
        <fullName evidence="6">GLE1 RNA export mediator</fullName>
    </alternativeName>
    <alternativeName>
        <fullName evidence="5">GLE1-like protein</fullName>
    </alternativeName>
    <alternativeName>
        <fullName evidence="5">Nucleoporin GLE1</fullName>
    </alternativeName>
</protein>
<organism>
    <name type="scientific">Mus musculus</name>
    <name type="common">Mouse</name>
    <dbReference type="NCBI Taxonomy" id="10090"/>
    <lineage>
        <taxon>Eukaryota</taxon>
        <taxon>Metazoa</taxon>
        <taxon>Chordata</taxon>
        <taxon>Craniata</taxon>
        <taxon>Vertebrata</taxon>
        <taxon>Euteleostomi</taxon>
        <taxon>Mammalia</taxon>
        <taxon>Eutheria</taxon>
        <taxon>Euarchontoglires</taxon>
        <taxon>Glires</taxon>
        <taxon>Rodentia</taxon>
        <taxon>Myomorpha</taxon>
        <taxon>Muroidea</taxon>
        <taxon>Muridae</taxon>
        <taxon>Murinae</taxon>
        <taxon>Mus</taxon>
        <taxon>Mus</taxon>
    </lineage>
</organism>
<sequence>MPSDGRCWETLRALRNTSKGRLRYDREWLLRYEDVLEECMSLPKLSSYSGWVVDHILPNTSGHTQESAPSSDNSPSSGSASGLYQSSLLKSPVRSSPQSPSPSSPNGTQSTHESPFTEPIAPQSSRAIKVEGCIRMYELAHRMRGTEGLRQWQEEQERKVRALSEMASEQLKRFDELKELKLHKEFQDLQEVMEKSTREALGHQEKLKEEHRHRAKILNLKLREAEQQRVKQAEQEQLRKEEGQVRLRSLYSLQEEVLQLNQQLDASSQHKELLSVDLAAFQTRGNQLCGLISSIIRTTLESGYPTAENQAEAERALQEMRDLLSDLEQEITRASQVKKKHEEEAKVKRQESQVQQGPAPPTQTSAPSPSPVGAQNEDLQVKVQDSTMQWYQQLQDASAKCVLAFEDLTSSKDSQTKKIKMDLQKAATIPVSQISTIAGSKLKEIFDKIHSLLSGKPVQSGGRSVSVTLNPQGLDFVQYKLAEKFVKQGEEEVASHHEAAFPIAVVASGIWMLHPKVGDLILAHLHKKCPYSVPFYPAFKEGMALEDYQRMLGYQVTDSKVEQQDNFLKRMSGMIRLYAAIIQLQWPYGNRQEAHPHGLNHGWRWLAQVLNMEPLSDVTATLLFDFLEVCGNALMKQYQVQFWKMILLIKEDYFPRIEAITSSGQMGSFIRLKQFLEKCLQRREIPVPRGFLTTSFWRS</sequence>
<proteinExistence type="evidence at protein level"/>
<gene>
    <name type="primary">Gle1</name>
    <name type="synonym">Gle1l</name>
</gene>
<evidence type="ECO:0000250" key="1"/>
<evidence type="ECO:0000250" key="2">
    <source>
        <dbReference type="UniProtKB" id="Q53GS7"/>
    </source>
</evidence>
<evidence type="ECO:0000255" key="3"/>
<evidence type="ECO:0000256" key="4">
    <source>
        <dbReference type="SAM" id="MobiDB-lite"/>
    </source>
</evidence>
<evidence type="ECO:0000305" key="5"/>
<evidence type="ECO:0000312" key="6">
    <source>
        <dbReference type="MGI" id="MGI:1921662"/>
    </source>
</evidence>
<evidence type="ECO:0007744" key="7">
    <source>
    </source>
</evidence>
<comment type="function">
    <text evidence="1">Required for the export of mRNAs containing poly(A) tails from the nucleus into the cytoplasm. May be involved in the terminal step of the mRNA transport through the nuclear pore complex (NPC) (By similarity).</text>
</comment>
<comment type="subunit">
    <text evidence="1">Associated with the NPC, however it may not be a stable component of the NPC complex since it shuttles between the nucleus and the cytoplasm. Interacts with nuclear pore complex proteins NUP155 and NUPL2 (By similarity).</text>
</comment>
<comment type="subcellular location">
    <subcellularLocation>
        <location evidence="2">Nucleus</location>
    </subcellularLocation>
    <subcellularLocation>
        <location evidence="2">Cytoplasm</location>
    </subcellularLocation>
    <subcellularLocation>
        <location evidence="2">Nucleus</location>
        <location evidence="2">Nuclear pore complex</location>
    </subcellularLocation>
    <text evidence="2">Shuttles between the nucleus and the cytoplasm. Shuttling is essential for its mRNA export function.</text>
</comment>
<comment type="similarity">
    <text evidence="5">Belongs to the GLE1 family.</text>
</comment>
<comment type="sequence caution" evidence="5">
    <conflict type="frameshift">
        <sequence resource="EMBL-CDS" id="BAC25796"/>
    </conflict>
</comment>
<comment type="sequence caution" evidence="5">
    <conflict type="frameshift">
        <sequence resource="EMBL-CDS" id="BAE36515"/>
    </conflict>
</comment>